<comment type="function">
    <text evidence="1">O-methyltransferase that catalyzes the 2 O-methylation steps in the ubiquinone biosynthetic pathway.</text>
</comment>
<comment type="catalytic activity">
    <reaction evidence="1">
        <text>a 3-demethylubiquinol + S-adenosyl-L-methionine = a ubiquinol + S-adenosyl-L-homocysteine + H(+)</text>
        <dbReference type="Rhea" id="RHEA:44380"/>
        <dbReference type="Rhea" id="RHEA-COMP:9566"/>
        <dbReference type="Rhea" id="RHEA-COMP:10914"/>
        <dbReference type="ChEBI" id="CHEBI:15378"/>
        <dbReference type="ChEBI" id="CHEBI:17976"/>
        <dbReference type="ChEBI" id="CHEBI:57856"/>
        <dbReference type="ChEBI" id="CHEBI:59789"/>
        <dbReference type="ChEBI" id="CHEBI:84422"/>
        <dbReference type="EC" id="2.1.1.64"/>
    </reaction>
</comment>
<comment type="catalytic activity">
    <reaction evidence="1">
        <text>a 3-(all-trans-polyprenyl)benzene-1,2-diol + S-adenosyl-L-methionine = a 2-methoxy-6-(all-trans-polyprenyl)phenol + S-adenosyl-L-homocysteine + H(+)</text>
        <dbReference type="Rhea" id="RHEA:31411"/>
        <dbReference type="Rhea" id="RHEA-COMP:9550"/>
        <dbReference type="Rhea" id="RHEA-COMP:9551"/>
        <dbReference type="ChEBI" id="CHEBI:15378"/>
        <dbReference type="ChEBI" id="CHEBI:57856"/>
        <dbReference type="ChEBI" id="CHEBI:59789"/>
        <dbReference type="ChEBI" id="CHEBI:62729"/>
        <dbReference type="ChEBI" id="CHEBI:62731"/>
        <dbReference type="EC" id="2.1.1.222"/>
    </reaction>
</comment>
<comment type="pathway">
    <text evidence="1">Cofactor biosynthesis; ubiquinone biosynthesis.</text>
</comment>
<comment type="similarity">
    <text evidence="1">Belongs to the methyltransferase superfamily. UbiG/COQ3 family.</text>
</comment>
<feature type="chain" id="PRO_1000199669" description="Ubiquinone biosynthesis O-methyltransferase">
    <location>
        <begin position="1"/>
        <end position="232"/>
    </location>
</feature>
<feature type="binding site" evidence="1">
    <location>
        <position position="36"/>
    </location>
    <ligand>
        <name>S-adenosyl-L-methionine</name>
        <dbReference type="ChEBI" id="CHEBI:59789"/>
    </ligand>
</feature>
<feature type="binding site" evidence="1">
    <location>
        <position position="55"/>
    </location>
    <ligand>
        <name>S-adenosyl-L-methionine</name>
        <dbReference type="ChEBI" id="CHEBI:59789"/>
    </ligand>
</feature>
<feature type="binding site" evidence="1">
    <location>
        <position position="76"/>
    </location>
    <ligand>
        <name>S-adenosyl-L-methionine</name>
        <dbReference type="ChEBI" id="CHEBI:59789"/>
    </ligand>
</feature>
<feature type="binding site" evidence="1">
    <location>
        <position position="120"/>
    </location>
    <ligand>
        <name>S-adenosyl-L-methionine</name>
        <dbReference type="ChEBI" id="CHEBI:59789"/>
    </ligand>
</feature>
<protein>
    <recommendedName>
        <fullName evidence="1">Ubiquinone biosynthesis O-methyltransferase</fullName>
    </recommendedName>
    <alternativeName>
        <fullName evidence="1">2-polyprenyl-6-hydroxyphenol methylase</fullName>
        <ecNumber evidence="1">2.1.1.222</ecNumber>
    </alternativeName>
    <alternativeName>
        <fullName evidence="1">3-demethylubiquinone 3-O-methyltransferase</fullName>
        <ecNumber evidence="1">2.1.1.64</ecNumber>
    </alternativeName>
</protein>
<sequence length="232" mass="25255">MTNADPHELQKFSDLAHRWWDPNAEFKPLHELNPVRLGWIDAHAHLAGKRALDIGCGGGILSESMAGLGAQVKGIDLSTEALGVADLHSLESGVTVDYEAIAAEALAEREPGTYDVVTCMEMLEHVPSPAGIVSACATLVKPGGWVFFSTLNRNLKSYLFAVIGAEYIARMLPKGTHDYARFIRPSELASFVRGTDLHIVEIKGITYHPIGKRFALSNDTDINYLVACRRGA</sequence>
<organism>
    <name type="scientific">Burkholderia ambifaria (strain MC40-6)</name>
    <dbReference type="NCBI Taxonomy" id="398577"/>
    <lineage>
        <taxon>Bacteria</taxon>
        <taxon>Pseudomonadati</taxon>
        <taxon>Pseudomonadota</taxon>
        <taxon>Betaproteobacteria</taxon>
        <taxon>Burkholderiales</taxon>
        <taxon>Burkholderiaceae</taxon>
        <taxon>Burkholderia</taxon>
        <taxon>Burkholderia cepacia complex</taxon>
    </lineage>
</organism>
<proteinExistence type="inferred from homology"/>
<gene>
    <name evidence="1" type="primary">ubiG</name>
    <name type="ordered locus">BamMC406_0918</name>
</gene>
<name>UBIG_BURA4</name>
<reference key="1">
    <citation type="submission" date="2008-04" db="EMBL/GenBank/DDBJ databases">
        <title>Complete sequence of chromosome 1 of Burkholderia ambifaria MC40-6.</title>
        <authorList>
            <person name="Copeland A."/>
            <person name="Lucas S."/>
            <person name="Lapidus A."/>
            <person name="Glavina del Rio T."/>
            <person name="Dalin E."/>
            <person name="Tice H."/>
            <person name="Pitluck S."/>
            <person name="Chain P."/>
            <person name="Malfatti S."/>
            <person name="Shin M."/>
            <person name="Vergez L."/>
            <person name="Lang D."/>
            <person name="Schmutz J."/>
            <person name="Larimer F."/>
            <person name="Land M."/>
            <person name="Hauser L."/>
            <person name="Kyrpides N."/>
            <person name="Lykidis A."/>
            <person name="Ramette A."/>
            <person name="Konstantinidis K."/>
            <person name="Tiedje J."/>
            <person name="Richardson P."/>
        </authorList>
    </citation>
    <scope>NUCLEOTIDE SEQUENCE [LARGE SCALE GENOMIC DNA]</scope>
    <source>
        <strain>MC40-6</strain>
    </source>
</reference>
<evidence type="ECO:0000255" key="1">
    <source>
        <dbReference type="HAMAP-Rule" id="MF_00472"/>
    </source>
</evidence>
<accession>B1YV26</accession>
<keyword id="KW-0489">Methyltransferase</keyword>
<keyword id="KW-0949">S-adenosyl-L-methionine</keyword>
<keyword id="KW-0808">Transferase</keyword>
<keyword id="KW-0831">Ubiquinone biosynthesis</keyword>
<dbReference type="EC" id="2.1.1.222" evidence="1"/>
<dbReference type="EC" id="2.1.1.64" evidence="1"/>
<dbReference type="EMBL" id="CP001025">
    <property type="protein sequence ID" value="ACB63409.1"/>
    <property type="molecule type" value="Genomic_DNA"/>
</dbReference>
<dbReference type="RefSeq" id="WP_011656273.1">
    <property type="nucleotide sequence ID" value="NC_010551.1"/>
</dbReference>
<dbReference type="SMR" id="B1YV26"/>
<dbReference type="GeneID" id="93083677"/>
<dbReference type="KEGG" id="bac:BamMC406_0918"/>
<dbReference type="HOGENOM" id="CLU_042432_5_0_4"/>
<dbReference type="OrthoDB" id="9801538at2"/>
<dbReference type="UniPathway" id="UPA00232"/>
<dbReference type="Proteomes" id="UP000001680">
    <property type="component" value="Chromosome 1"/>
</dbReference>
<dbReference type="GO" id="GO:0102208">
    <property type="term" value="F:2-polyprenyl-6-hydroxyphenol methylase activity"/>
    <property type="evidence" value="ECO:0007669"/>
    <property type="project" value="UniProtKB-EC"/>
</dbReference>
<dbReference type="GO" id="GO:0061542">
    <property type="term" value="F:3-demethylubiquinol 3-O-methyltransferase activity"/>
    <property type="evidence" value="ECO:0007669"/>
    <property type="project" value="UniProtKB-UniRule"/>
</dbReference>
<dbReference type="GO" id="GO:0010420">
    <property type="term" value="F:polyprenyldihydroxybenzoate methyltransferase activity"/>
    <property type="evidence" value="ECO:0007669"/>
    <property type="project" value="InterPro"/>
</dbReference>
<dbReference type="GO" id="GO:0032259">
    <property type="term" value="P:methylation"/>
    <property type="evidence" value="ECO:0007669"/>
    <property type="project" value="UniProtKB-KW"/>
</dbReference>
<dbReference type="CDD" id="cd02440">
    <property type="entry name" value="AdoMet_MTases"/>
    <property type="match status" value="1"/>
</dbReference>
<dbReference type="FunFam" id="3.40.50.150:FF:000028">
    <property type="entry name" value="Ubiquinone biosynthesis O-methyltransferase"/>
    <property type="match status" value="1"/>
</dbReference>
<dbReference type="Gene3D" id="3.40.50.150">
    <property type="entry name" value="Vaccinia Virus protein VP39"/>
    <property type="match status" value="1"/>
</dbReference>
<dbReference type="HAMAP" id="MF_00472">
    <property type="entry name" value="UbiG"/>
    <property type="match status" value="1"/>
</dbReference>
<dbReference type="InterPro" id="IPR029063">
    <property type="entry name" value="SAM-dependent_MTases_sf"/>
</dbReference>
<dbReference type="InterPro" id="IPR010233">
    <property type="entry name" value="UbiG_MeTrfase"/>
</dbReference>
<dbReference type="NCBIfam" id="TIGR01983">
    <property type="entry name" value="UbiG"/>
    <property type="match status" value="1"/>
</dbReference>
<dbReference type="PANTHER" id="PTHR43464">
    <property type="entry name" value="METHYLTRANSFERASE"/>
    <property type="match status" value="1"/>
</dbReference>
<dbReference type="PANTHER" id="PTHR43464:SF19">
    <property type="entry name" value="UBIQUINONE BIOSYNTHESIS O-METHYLTRANSFERASE, MITOCHONDRIAL"/>
    <property type="match status" value="1"/>
</dbReference>
<dbReference type="Pfam" id="PF13489">
    <property type="entry name" value="Methyltransf_23"/>
    <property type="match status" value="1"/>
</dbReference>
<dbReference type="SUPFAM" id="SSF53335">
    <property type="entry name" value="S-adenosyl-L-methionine-dependent methyltransferases"/>
    <property type="match status" value="1"/>
</dbReference>